<evidence type="ECO:0000255" key="1">
    <source>
        <dbReference type="HAMAP-Rule" id="MF_00071"/>
    </source>
</evidence>
<keyword id="KW-0997">Cell inner membrane</keyword>
<keyword id="KW-1003">Cell membrane</keyword>
<keyword id="KW-0342">GTP-binding</keyword>
<keyword id="KW-0378">Hydrolase</keyword>
<keyword id="KW-0472">Membrane</keyword>
<keyword id="KW-0547">Nucleotide-binding</keyword>
<keyword id="KW-0648">Protein biosynthesis</keyword>
<feature type="chain" id="PRO_1000032033" description="Elongation factor 4">
    <location>
        <begin position="1"/>
        <end position="603"/>
    </location>
</feature>
<feature type="domain" description="tr-type G">
    <location>
        <begin position="7"/>
        <end position="189"/>
    </location>
</feature>
<feature type="binding site" evidence="1">
    <location>
        <begin position="19"/>
        <end position="24"/>
    </location>
    <ligand>
        <name>GTP</name>
        <dbReference type="ChEBI" id="CHEBI:37565"/>
    </ligand>
</feature>
<feature type="binding site" evidence="1">
    <location>
        <begin position="136"/>
        <end position="139"/>
    </location>
    <ligand>
        <name>GTP</name>
        <dbReference type="ChEBI" id="CHEBI:37565"/>
    </ligand>
</feature>
<reference key="1">
    <citation type="journal article" date="2007" name="PLoS Genet.">
        <title>Patterns and implications of gene gain and loss in the evolution of Prochlorococcus.</title>
        <authorList>
            <person name="Kettler G.C."/>
            <person name="Martiny A.C."/>
            <person name="Huang K."/>
            <person name="Zucker J."/>
            <person name="Coleman M.L."/>
            <person name="Rodrigue S."/>
            <person name="Chen F."/>
            <person name="Lapidus A."/>
            <person name="Ferriera S."/>
            <person name="Johnson J."/>
            <person name="Steglich C."/>
            <person name="Church G.M."/>
            <person name="Richardson P."/>
            <person name="Chisholm S.W."/>
        </authorList>
    </citation>
    <scope>NUCLEOTIDE SEQUENCE [LARGE SCALE GENOMIC DNA]</scope>
    <source>
        <strain>NATL1A</strain>
    </source>
</reference>
<name>LEPA_PROM1</name>
<proteinExistence type="inferred from homology"/>
<accession>A2C0M8</accession>
<protein>
    <recommendedName>
        <fullName evidence="1">Elongation factor 4</fullName>
        <shortName evidence="1">EF-4</shortName>
        <ecNumber evidence="1">3.6.5.n1</ecNumber>
    </recommendedName>
    <alternativeName>
        <fullName evidence="1">Ribosomal back-translocase LepA</fullName>
    </alternativeName>
</protein>
<organism>
    <name type="scientific">Prochlorococcus marinus (strain NATL1A)</name>
    <dbReference type="NCBI Taxonomy" id="167555"/>
    <lineage>
        <taxon>Bacteria</taxon>
        <taxon>Bacillati</taxon>
        <taxon>Cyanobacteriota</taxon>
        <taxon>Cyanophyceae</taxon>
        <taxon>Synechococcales</taxon>
        <taxon>Prochlorococcaceae</taxon>
        <taxon>Prochlorococcus</taxon>
    </lineage>
</organism>
<dbReference type="EC" id="3.6.5.n1" evidence="1"/>
<dbReference type="EMBL" id="CP000553">
    <property type="protein sequence ID" value="ABM75038.1"/>
    <property type="molecule type" value="Genomic_DNA"/>
</dbReference>
<dbReference type="RefSeq" id="WP_011823223.1">
    <property type="nucleotide sequence ID" value="NC_008819.1"/>
</dbReference>
<dbReference type="SMR" id="A2C0M8"/>
<dbReference type="KEGG" id="pme:NATL1_04741"/>
<dbReference type="eggNOG" id="COG0481">
    <property type="taxonomic scope" value="Bacteria"/>
</dbReference>
<dbReference type="HOGENOM" id="CLU_009995_3_3_3"/>
<dbReference type="Proteomes" id="UP000002592">
    <property type="component" value="Chromosome"/>
</dbReference>
<dbReference type="GO" id="GO:0005886">
    <property type="term" value="C:plasma membrane"/>
    <property type="evidence" value="ECO:0007669"/>
    <property type="project" value="UniProtKB-SubCell"/>
</dbReference>
<dbReference type="GO" id="GO:0005525">
    <property type="term" value="F:GTP binding"/>
    <property type="evidence" value="ECO:0007669"/>
    <property type="project" value="UniProtKB-KW"/>
</dbReference>
<dbReference type="GO" id="GO:0003924">
    <property type="term" value="F:GTPase activity"/>
    <property type="evidence" value="ECO:0007669"/>
    <property type="project" value="InterPro"/>
</dbReference>
<dbReference type="GO" id="GO:0043022">
    <property type="term" value="F:ribosome binding"/>
    <property type="evidence" value="ECO:0007669"/>
    <property type="project" value="TreeGrafter"/>
</dbReference>
<dbReference type="GO" id="GO:0045727">
    <property type="term" value="P:positive regulation of translation"/>
    <property type="evidence" value="ECO:0007669"/>
    <property type="project" value="TreeGrafter"/>
</dbReference>
<dbReference type="GO" id="GO:0006412">
    <property type="term" value="P:translation"/>
    <property type="evidence" value="ECO:0007669"/>
    <property type="project" value="UniProtKB-KW"/>
</dbReference>
<dbReference type="CDD" id="cd03699">
    <property type="entry name" value="EF4_II"/>
    <property type="match status" value="1"/>
</dbReference>
<dbReference type="CDD" id="cd16260">
    <property type="entry name" value="EF4_III"/>
    <property type="match status" value="1"/>
</dbReference>
<dbReference type="CDD" id="cd01890">
    <property type="entry name" value="LepA"/>
    <property type="match status" value="1"/>
</dbReference>
<dbReference type="CDD" id="cd03709">
    <property type="entry name" value="lepA_C"/>
    <property type="match status" value="1"/>
</dbReference>
<dbReference type="FunFam" id="3.40.50.300:FF:000078">
    <property type="entry name" value="Elongation factor 4"/>
    <property type="match status" value="1"/>
</dbReference>
<dbReference type="FunFam" id="2.40.30.10:FF:000015">
    <property type="entry name" value="Translation factor GUF1, mitochondrial"/>
    <property type="match status" value="1"/>
</dbReference>
<dbReference type="FunFam" id="3.30.70.240:FF:000007">
    <property type="entry name" value="Translation factor GUF1, mitochondrial"/>
    <property type="match status" value="1"/>
</dbReference>
<dbReference type="FunFam" id="3.30.70.2570:FF:000001">
    <property type="entry name" value="Translation factor GUF1, mitochondrial"/>
    <property type="match status" value="1"/>
</dbReference>
<dbReference type="FunFam" id="3.30.70.870:FF:000004">
    <property type="entry name" value="Translation factor GUF1, mitochondrial"/>
    <property type="match status" value="1"/>
</dbReference>
<dbReference type="Gene3D" id="3.30.70.240">
    <property type="match status" value="1"/>
</dbReference>
<dbReference type="Gene3D" id="3.30.70.2570">
    <property type="entry name" value="Elongation factor 4, C-terminal domain"/>
    <property type="match status" value="1"/>
</dbReference>
<dbReference type="Gene3D" id="3.30.70.870">
    <property type="entry name" value="Elongation Factor G (Translational Gtpase), domain 3"/>
    <property type="match status" value="1"/>
</dbReference>
<dbReference type="Gene3D" id="3.40.50.300">
    <property type="entry name" value="P-loop containing nucleotide triphosphate hydrolases"/>
    <property type="match status" value="1"/>
</dbReference>
<dbReference type="Gene3D" id="2.40.30.10">
    <property type="entry name" value="Translation factors"/>
    <property type="match status" value="1"/>
</dbReference>
<dbReference type="HAMAP" id="MF_03138">
    <property type="entry name" value="GUFP"/>
    <property type="match status" value="1"/>
</dbReference>
<dbReference type="HAMAP" id="MF_00071">
    <property type="entry name" value="LepA"/>
    <property type="match status" value="1"/>
</dbReference>
<dbReference type="InterPro" id="IPR006297">
    <property type="entry name" value="EF-4"/>
</dbReference>
<dbReference type="InterPro" id="IPR035647">
    <property type="entry name" value="EFG_III/V"/>
</dbReference>
<dbReference type="InterPro" id="IPR000640">
    <property type="entry name" value="EFG_V-like"/>
</dbReference>
<dbReference type="InterPro" id="IPR004161">
    <property type="entry name" value="EFTu-like_2"/>
</dbReference>
<dbReference type="InterPro" id="IPR031157">
    <property type="entry name" value="G_TR_CS"/>
</dbReference>
<dbReference type="InterPro" id="IPR027518">
    <property type="entry name" value="GUFP"/>
</dbReference>
<dbReference type="InterPro" id="IPR038363">
    <property type="entry name" value="LepA_C_sf"/>
</dbReference>
<dbReference type="InterPro" id="IPR013842">
    <property type="entry name" value="LepA_CTD"/>
</dbReference>
<dbReference type="InterPro" id="IPR035654">
    <property type="entry name" value="LepA_IV"/>
</dbReference>
<dbReference type="InterPro" id="IPR027417">
    <property type="entry name" value="P-loop_NTPase"/>
</dbReference>
<dbReference type="InterPro" id="IPR005225">
    <property type="entry name" value="Small_GTP-bd"/>
</dbReference>
<dbReference type="InterPro" id="IPR000795">
    <property type="entry name" value="T_Tr_GTP-bd_dom"/>
</dbReference>
<dbReference type="InterPro" id="IPR009000">
    <property type="entry name" value="Transl_B-barrel_sf"/>
</dbReference>
<dbReference type="NCBIfam" id="TIGR01393">
    <property type="entry name" value="lepA"/>
    <property type="match status" value="1"/>
</dbReference>
<dbReference type="NCBIfam" id="TIGR00231">
    <property type="entry name" value="small_GTP"/>
    <property type="match status" value="1"/>
</dbReference>
<dbReference type="PANTHER" id="PTHR43512:SF4">
    <property type="entry name" value="TRANSLATION FACTOR GUF1 HOMOLOG, CHLOROPLASTIC"/>
    <property type="match status" value="1"/>
</dbReference>
<dbReference type="PANTHER" id="PTHR43512">
    <property type="entry name" value="TRANSLATION FACTOR GUF1-RELATED"/>
    <property type="match status" value="1"/>
</dbReference>
<dbReference type="Pfam" id="PF00679">
    <property type="entry name" value="EFG_C"/>
    <property type="match status" value="1"/>
</dbReference>
<dbReference type="Pfam" id="PF00009">
    <property type="entry name" value="GTP_EFTU"/>
    <property type="match status" value="1"/>
</dbReference>
<dbReference type="Pfam" id="PF03144">
    <property type="entry name" value="GTP_EFTU_D2"/>
    <property type="match status" value="1"/>
</dbReference>
<dbReference type="Pfam" id="PF06421">
    <property type="entry name" value="LepA_C"/>
    <property type="match status" value="1"/>
</dbReference>
<dbReference type="PRINTS" id="PR00315">
    <property type="entry name" value="ELONGATNFCT"/>
</dbReference>
<dbReference type="SMART" id="SM00838">
    <property type="entry name" value="EFG_C"/>
    <property type="match status" value="1"/>
</dbReference>
<dbReference type="SUPFAM" id="SSF54980">
    <property type="entry name" value="EF-G C-terminal domain-like"/>
    <property type="match status" value="2"/>
</dbReference>
<dbReference type="SUPFAM" id="SSF52540">
    <property type="entry name" value="P-loop containing nucleoside triphosphate hydrolases"/>
    <property type="match status" value="1"/>
</dbReference>
<dbReference type="SUPFAM" id="SSF50447">
    <property type="entry name" value="Translation proteins"/>
    <property type="match status" value="1"/>
</dbReference>
<dbReference type="PROSITE" id="PS00301">
    <property type="entry name" value="G_TR_1"/>
    <property type="match status" value="1"/>
</dbReference>
<dbReference type="PROSITE" id="PS51722">
    <property type="entry name" value="G_TR_2"/>
    <property type="match status" value="1"/>
</dbReference>
<gene>
    <name evidence="1" type="primary">lepA</name>
    <name type="ordered locus">NATL1_04741</name>
</gene>
<comment type="function">
    <text evidence="1">Required for accurate and efficient protein synthesis under certain stress conditions. May act as a fidelity factor of the translation reaction, by catalyzing a one-codon backward translocation of tRNAs on improperly translocated ribosomes. Back-translocation proceeds from a post-translocation (POST) complex to a pre-translocation (PRE) complex, thus giving elongation factor G a second chance to translocate the tRNAs correctly. Binds to ribosomes in a GTP-dependent manner.</text>
</comment>
<comment type="catalytic activity">
    <reaction evidence="1">
        <text>GTP + H2O = GDP + phosphate + H(+)</text>
        <dbReference type="Rhea" id="RHEA:19669"/>
        <dbReference type="ChEBI" id="CHEBI:15377"/>
        <dbReference type="ChEBI" id="CHEBI:15378"/>
        <dbReference type="ChEBI" id="CHEBI:37565"/>
        <dbReference type="ChEBI" id="CHEBI:43474"/>
        <dbReference type="ChEBI" id="CHEBI:58189"/>
        <dbReference type="EC" id="3.6.5.n1"/>
    </reaction>
</comment>
<comment type="subcellular location">
    <subcellularLocation>
        <location evidence="1">Cell inner membrane</location>
        <topology evidence="1">Peripheral membrane protein</topology>
        <orientation evidence="1">Cytoplasmic side</orientation>
    </subcellularLocation>
</comment>
<comment type="similarity">
    <text evidence="1">Belongs to the TRAFAC class translation factor GTPase superfamily. Classic translation factor GTPase family. LepA subfamily.</text>
</comment>
<sequence length="603" mass="67124">MTNVPISRLRNFCIIAHIDHGKSTLADRLLQDTGTVSSRDMQEQFLDNMDLERERGITIKLQAARMNYKADDGEEYVLNLIDTPGHVDFSYEVSRSLQACEGALLVVDASQGVEAQTLANVYLALENDLEIIPVLNKVDLPGADPEKIKNEIESIIGLDTSKAISCSAKTGVGIPEILQAVVDRIPSPKDNTDQATKALIFDSYYDPYRGVIVYFRIMSGGISKKDKVLLMSSKKSYELDEIGVMAPDQVKVNSLHAGEVGYLAASIKAVADARVGDTITLVDRPAEDALPGYAEAKPMVFCGLFPTDADQYPDLRDALDKLQLSDAALKYEPETSSAMGFGFRCGFLGLLHMEIVQERLEREYDLDLIVTAPSVIYKVKMIDGEVKMIDNPATLPDPQKRETIEEPYVRMEIYAPNDYNGTLMGLCQDRRGDFIDMKYITTDRVTLIYEIPLAEVVTDFFDQMKSRTKGYASMEYHLIGYRENDLVRLDVLINSERADPLTTIVHKDNAYGVGKGLVEKLKELIPKQQFKIPLQASIGSRIIASEGISALRKDVLSKCYGGDISRKKKLLKKQAKGKKRMKSMGKVDVPQEAFMAVLKLNND</sequence>